<reference key="1">
    <citation type="journal article" date="2009" name="PLoS Genet.">
        <title>Organised genome dynamics in the Escherichia coli species results in highly diverse adaptive paths.</title>
        <authorList>
            <person name="Touchon M."/>
            <person name="Hoede C."/>
            <person name="Tenaillon O."/>
            <person name="Barbe V."/>
            <person name="Baeriswyl S."/>
            <person name="Bidet P."/>
            <person name="Bingen E."/>
            <person name="Bonacorsi S."/>
            <person name="Bouchier C."/>
            <person name="Bouvet O."/>
            <person name="Calteau A."/>
            <person name="Chiapello H."/>
            <person name="Clermont O."/>
            <person name="Cruveiller S."/>
            <person name="Danchin A."/>
            <person name="Diard M."/>
            <person name="Dossat C."/>
            <person name="Karoui M.E."/>
            <person name="Frapy E."/>
            <person name="Garry L."/>
            <person name="Ghigo J.M."/>
            <person name="Gilles A.M."/>
            <person name="Johnson J."/>
            <person name="Le Bouguenec C."/>
            <person name="Lescat M."/>
            <person name="Mangenot S."/>
            <person name="Martinez-Jehanne V."/>
            <person name="Matic I."/>
            <person name="Nassif X."/>
            <person name="Oztas S."/>
            <person name="Petit M.A."/>
            <person name="Pichon C."/>
            <person name="Rouy Z."/>
            <person name="Ruf C.S."/>
            <person name="Schneider D."/>
            <person name="Tourret J."/>
            <person name="Vacherie B."/>
            <person name="Vallenet D."/>
            <person name="Medigue C."/>
            <person name="Rocha E.P.C."/>
            <person name="Denamur E."/>
        </authorList>
    </citation>
    <scope>NUCLEOTIDE SEQUENCE [LARGE SCALE GENOMIC DNA]</scope>
    <source>
        <strain>UMN026 / ExPEC</strain>
    </source>
</reference>
<comment type="function">
    <text evidence="1">Trans-acting protein required for termination of DNA replication. Binds to DNA replication terminator sequences (terA to terF) to prevent the passage of replication forks. The termination efficiency will be affected by the affinity of this protein for the terminator sequence.</text>
</comment>
<comment type="subcellular location">
    <subcellularLocation>
        <location evidence="1">Cytoplasm</location>
    </subcellularLocation>
</comment>
<comment type="similarity">
    <text evidence="1">Belongs to the Tus family.</text>
</comment>
<feature type="chain" id="PRO_1000126038" description="DNA replication terminus site-binding protein">
    <location>
        <begin position="1"/>
        <end position="309"/>
    </location>
</feature>
<organism>
    <name type="scientific">Escherichia coli O17:K52:H18 (strain UMN026 / ExPEC)</name>
    <dbReference type="NCBI Taxonomy" id="585056"/>
    <lineage>
        <taxon>Bacteria</taxon>
        <taxon>Pseudomonadati</taxon>
        <taxon>Pseudomonadota</taxon>
        <taxon>Gammaproteobacteria</taxon>
        <taxon>Enterobacterales</taxon>
        <taxon>Enterobacteriaceae</taxon>
        <taxon>Escherichia</taxon>
    </lineage>
</organism>
<name>TUS_ECOLU</name>
<gene>
    <name evidence="1" type="primary">tus</name>
    <name type="ordered locus">ECUMN_1899</name>
</gene>
<sequence>MARYDLVDRLNTTFRQMEQELAAFAAHLEQHKLLVARVFSLPEVKKEDEHNPLNRIEVKQHLGNDAQSLALRHFRHLFIQQQSENRSSKAAVRLPGVLCYQVDNLSQAALVSHIQHINQLKTTFEHIVTVESELPTAARFEWVHRHLPGLITLNAYRTLTVLHDPATLRFGWANKHIIKNLHRDEVLAQLEKSLKSPRSVAPWTREEWQRKLEREYQDIATLPQDAKLKIKRPVKVQPIARVWYKGDQKQVQHACPTPLIALINRDNGAGVPDVGELLNYDADNVQHRYKPQAQPLRLIIPRLHLYVAD</sequence>
<dbReference type="EMBL" id="CU928163">
    <property type="protein sequence ID" value="CAR13097.1"/>
    <property type="molecule type" value="Genomic_DNA"/>
</dbReference>
<dbReference type="RefSeq" id="WP_001309528.1">
    <property type="nucleotide sequence ID" value="NC_011751.1"/>
</dbReference>
<dbReference type="RefSeq" id="YP_002412629.1">
    <property type="nucleotide sequence ID" value="NC_011751.1"/>
</dbReference>
<dbReference type="SMR" id="B7NB63"/>
<dbReference type="STRING" id="585056.ECUMN_1899"/>
<dbReference type="KEGG" id="eum:ECUMN_1899"/>
<dbReference type="PATRIC" id="fig|585056.7.peg.2084"/>
<dbReference type="HOGENOM" id="CLU_078181_0_0_6"/>
<dbReference type="Proteomes" id="UP000007097">
    <property type="component" value="Chromosome"/>
</dbReference>
<dbReference type="GO" id="GO:0005737">
    <property type="term" value="C:cytoplasm"/>
    <property type="evidence" value="ECO:0007669"/>
    <property type="project" value="UniProtKB-SubCell"/>
</dbReference>
<dbReference type="GO" id="GO:0003677">
    <property type="term" value="F:DNA binding"/>
    <property type="evidence" value="ECO:0007669"/>
    <property type="project" value="UniProtKB-UniRule"/>
</dbReference>
<dbReference type="GO" id="GO:0006274">
    <property type="term" value="P:DNA replication termination"/>
    <property type="evidence" value="ECO:0007669"/>
    <property type="project" value="UniProtKB-UniRule"/>
</dbReference>
<dbReference type="Gene3D" id="3.30.54.10">
    <property type="match status" value="1"/>
</dbReference>
<dbReference type="Gene3D" id="3.50.14.10">
    <property type="entry name" value="Replication terminator Tus, domain 1 superfamily/Replication terminator Tus"/>
    <property type="match status" value="1"/>
</dbReference>
<dbReference type="HAMAP" id="MF_00483">
    <property type="entry name" value="Rep_term_Tus"/>
    <property type="match status" value="1"/>
</dbReference>
<dbReference type="InterPro" id="IPR008865">
    <property type="entry name" value="DNA_replication_term_site-bd"/>
</dbReference>
<dbReference type="InterPro" id="IPR036381">
    <property type="entry name" value="Tus_dom1"/>
</dbReference>
<dbReference type="InterPro" id="IPR036384">
    <property type="entry name" value="Tus_sf"/>
</dbReference>
<dbReference type="NCBIfam" id="TIGR02648">
    <property type="entry name" value="rep_term_tus"/>
    <property type="match status" value="1"/>
</dbReference>
<dbReference type="Pfam" id="PF05472">
    <property type="entry name" value="Ter"/>
    <property type="match status" value="1"/>
</dbReference>
<dbReference type="SUPFAM" id="SSF56596">
    <property type="entry name" value="Replication terminator protein (Tus)"/>
    <property type="match status" value="1"/>
</dbReference>
<accession>B7NB63</accession>
<evidence type="ECO:0000255" key="1">
    <source>
        <dbReference type="HAMAP-Rule" id="MF_00483"/>
    </source>
</evidence>
<proteinExistence type="inferred from homology"/>
<protein>
    <recommendedName>
        <fullName evidence="1">DNA replication terminus site-binding protein</fullName>
        <shortName evidence="1">Ter-binding protein</shortName>
    </recommendedName>
</protein>
<keyword id="KW-0963">Cytoplasm</keyword>
<keyword id="KW-0235">DNA replication</keyword>
<keyword id="KW-0238">DNA-binding</keyword>